<keyword id="KW-0963">Cytoplasm</keyword>
<keyword id="KW-0271">Exosome</keyword>
<keyword id="KW-0539">Nucleus</keyword>
<keyword id="KW-1185">Reference proteome</keyword>
<keyword id="KW-0694">RNA-binding</keyword>
<keyword id="KW-0698">rRNA processing</keyword>
<reference key="1">
    <citation type="journal article" date="1999" name="Nature">
        <title>Sequence and analysis of chromosome 4 of the plant Arabidopsis thaliana.</title>
        <authorList>
            <person name="Mayer K.F.X."/>
            <person name="Schueller C."/>
            <person name="Wambutt R."/>
            <person name="Murphy G."/>
            <person name="Volckaert G."/>
            <person name="Pohl T."/>
            <person name="Duesterhoeft A."/>
            <person name="Stiekema W."/>
            <person name="Entian K.-D."/>
            <person name="Terryn N."/>
            <person name="Harris B."/>
            <person name="Ansorge W."/>
            <person name="Brandt P."/>
            <person name="Grivell L.A."/>
            <person name="Rieger M."/>
            <person name="Weichselgartner M."/>
            <person name="de Simone V."/>
            <person name="Obermaier B."/>
            <person name="Mache R."/>
            <person name="Mueller M."/>
            <person name="Kreis M."/>
            <person name="Delseny M."/>
            <person name="Puigdomenech P."/>
            <person name="Watson M."/>
            <person name="Schmidtheini T."/>
            <person name="Reichert B."/>
            <person name="Portetelle D."/>
            <person name="Perez-Alonso M."/>
            <person name="Boutry M."/>
            <person name="Bancroft I."/>
            <person name="Vos P."/>
            <person name="Hoheisel J."/>
            <person name="Zimmermann W."/>
            <person name="Wedler H."/>
            <person name="Ridley P."/>
            <person name="Langham S.-A."/>
            <person name="McCullagh B."/>
            <person name="Bilham L."/>
            <person name="Robben J."/>
            <person name="van der Schueren J."/>
            <person name="Grymonprez B."/>
            <person name="Chuang Y.-J."/>
            <person name="Vandenbussche F."/>
            <person name="Braeken M."/>
            <person name="Weltjens I."/>
            <person name="Voet M."/>
            <person name="Bastiaens I."/>
            <person name="Aert R."/>
            <person name="Defoor E."/>
            <person name="Weitzenegger T."/>
            <person name="Bothe G."/>
            <person name="Ramsperger U."/>
            <person name="Hilbert H."/>
            <person name="Braun M."/>
            <person name="Holzer E."/>
            <person name="Brandt A."/>
            <person name="Peters S."/>
            <person name="van Staveren M."/>
            <person name="Dirkse W."/>
            <person name="Mooijman P."/>
            <person name="Klein Lankhorst R."/>
            <person name="Rose M."/>
            <person name="Hauf J."/>
            <person name="Koetter P."/>
            <person name="Berneiser S."/>
            <person name="Hempel S."/>
            <person name="Feldpausch M."/>
            <person name="Lamberth S."/>
            <person name="Van den Daele H."/>
            <person name="De Keyser A."/>
            <person name="Buysshaert C."/>
            <person name="Gielen J."/>
            <person name="Villarroel R."/>
            <person name="De Clercq R."/>
            <person name="van Montagu M."/>
            <person name="Rogers J."/>
            <person name="Cronin A."/>
            <person name="Quail M.A."/>
            <person name="Bray-Allen S."/>
            <person name="Clark L."/>
            <person name="Doggett J."/>
            <person name="Hall S."/>
            <person name="Kay M."/>
            <person name="Lennard N."/>
            <person name="McLay K."/>
            <person name="Mayes R."/>
            <person name="Pettett A."/>
            <person name="Rajandream M.A."/>
            <person name="Lyne M."/>
            <person name="Benes V."/>
            <person name="Rechmann S."/>
            <person name="Borkova D."/>
            <person name="Bloecker H."/>
            <person name="Scharfe M."/>
            <person name="Grimm M."/>
            <person name="Loehnert T.-H."/>
            <person name="Dose S."/>
            <person name="de Haan M."/>
            <person name="Maarse A.C."/>
            <person name="Schaefer M."/>
            <person name="Mueller-Auer S."/>
            <person name="Gabel C."/>
            <person name="Fuchs M."/>
            <person name="Fartmann B."/>
            <person name="Granderath K."/>
            <person name="Dauner D."/>
            <person name="Herzl A."/>
            <person name="Neumann S."/>
            <person name="Argiriou A."/>
            <person name="Vitale D."/>
            <person name="Liguori R."/>
            <person name="Piravandi E."/>
            <person name="Massenet O."/>
            <person name="Quigley F."/>
            <person name="Clabauld G."/>
            <person name="Muendlein A."/>
            <person name="Felber R."/>
            <person name="Schnabl S."/>
            <person name="Hiller R."/>
            <person name="Schmidt W."/>
            <person name="Lecharny A."/>
            <person name="Aubourg S."/>
            <person name="Chefdor F."/>
            <person name="Cooke R."/>
            <person name="Berger C."/>
            <person name="Monfort A."/>
            <person name="Casacuberta E."/>
            <person name="Gibbons T."/>
            <person name="Weber N."/>
            <person name="Vandenbol M."/>
            <person name="Bargues M."/>
            <person name="Terol J."/>
            <person name="Torres A."/>
            <person name="Perez-Perez A."/>
            <person name="Purnelle B."/>
            <person name="Bent E."/>
            <person name="Johnson S."/>
            <person name="Tacon D."/>
            <person name="Jesse T."/>
            <person name="Heijnen L."/>
            <person name="Schwarz S."/>
            <person name="Scholler P."/>
            <person name="Heber S."/>
            <person name="Francs P."/>
            <person name="Bielke C."/>
            <person name="Frishman D."/>
            <person name="Haase D."/>
            <person name="Lemcke K."/>
            <person name="Mewes H.-W."/>
            <person name="Stocker S."/>
            <person name="Zaccaria P."/>
            <person name="Bevan M."/>
            <person name="Wilson R.K."/>
            <person name="de la Bastide M."/>
            <person name="Habermann K."/>
            <person name="Parnell L."/>
            <person name="Dedhia N."/>
            <person name="Gnoj L."/>
            <person name="Schutz K."/>
            <person name="Huang E."/>
            <person name="Spiegel L."/>
            <person name="Sekhon M."/>
            <person name="Murray J."/>
            <person name="Sheet P."/>
            <person name="Cordes M."/>
            <person name="Abu-Threideh J."/>
            <person name="Stoneking T."/>
            <person name="Kalicki J."/>
            <person name="Graves T."/>
            <person name="Harmon G."/>
            <person name="Edwards J."/>
            <person name="Latreille P."/>
            <person name="Courtney L."/>
            <person name="Cloud J."/>
            <person name="Abbott A."/>
            <person name="Scott K."/>
            <person name="Johnson D."/>
            <person name="Minx P."/>
            <person name="Bentley D."/>
            <person name="Fulton B."/>
            <person name="Miller N."/>
            <person name="Greco T."/>
            <person name="Kemp K."/>
            <person name="Kramer J."/>
            <person name="Fulton L."/>
            <person name="Mardis E."/>
            <person name="Dante M."/>
            <person name="Pepin K."/>
            <person name="Hillier L.W."/>
            <person name="Nelson J."/>
            <person name="Spieth J."/>
            <person name="Ryan E."/>
            <person name="Andrews S."/>
            <person name="Geisel C."/>
            <person name="Layman D."/>
            <person name="Du H."/>
            <person name="Ali J."/>
            <person name="Berghoff A."/>
            <person name="Jones K."/>
            <person name="Drone K."/>
            <person name="Cotton M."/>
            <person name="Joshu C."/>
            <person name="Antonoiu B."/>
            <person name="Zidanic M."/>
            <person name="Strong C."/>
            <person name="Sun H."/>
            <person name="Lamar B."/>
            <person name="Yordan C."/>
            <person name="Ma P."/>
            <person name="Zhong J."/>
            <person name="Preston R."/>
            <person name="Vil D."/>
            <person name="Shekher M."/>
            <person name="Matero A."/>
            <person name="Shah R."/>
            <person name="Swaby I.K."/>
            <person name="O'Shaughnessy A."/>
            <person name="Rodriguez M."/>
            <person name="Hoffman J."/>
            <person name="Till S."/>
            <person name="Granat S."/>
            <person name="Shohdy N."/>
            <person name="Hasegawa A."/>
            <person name="Hameed A."/>
            <person name="Lodhi M."/>
            <person name="Johnson A."/>
            <person name="Chen E."/>
            <person name="Marra M.A."/>
            <person name="Martienssen R."/>
            <person name="McCombie W.R."/>
        </authorList>
    </citation>
    <scope>NUCLEOTIDE SEQUENCE [LARGE SCALE GENOMIC DNA]</scope>
    <source>
        <strain>cv. Columbia</strain>
    </source>
</reference>
<reference key="2">
    <citation type="journal article" date="2017" name="Plant J.">
        <title>Araport11: a complete reannotation of the Arabidopsis thaliana reference genome.</title>
        <authorList>
            <person name="Cheng C.Y."/>
            <person name="Krishnakumar V."/>
            <person name="Chan A.P."/>
            <person name="Thibaud-Nissen F."/>
            <person name="Schobel S."/>
            <person name="Town C.D."/>
        </authorList>
    </citation>
    <scope>GENOME REANNOTATION</scope>
    <source>
        <strain>cv. Columbia</strain>
    </source>
</reference>
<reference key="3">
    <citation type="journal article" date="2002" name="Science">
        <title>Functional annotation of a full-length Arabidopsis cDNA collection.</title>
        <authorList>
            <person name="Seki M."/>
            <person name="Narusaka M."/>
            <person name="Kamiya A."/>
            <person name="Ishida J."/>
            <person name="Satou M."/>
            <person name="Sakurai T."/>
            <person name="Nakajima M."/>
            <person name="Enju A."/>
            <person name="Akiyama K."/>
            <person name="Oono Y."/>
            <person name="Muramatsu M."/>
            <person name="Hayashizaki Y."/>
            <person name="Kawai J."/>
            <person name="Carninci P."/>
            <person name="Itoh M."/>
            <person name="Ishii Y."/>
            <person name="Arakawa T."/>
            <person name="Shibata K."/>
            <person name="Shinagawa A."/>
            <person name="Shinozaki K."/>
        </authorList>
    </citation>
    <scope>NUCLEOTIDE SEQUENCE [LARGE SCALE MRNA]</scope>
    <source>
        <strain>cv. Columbia</strain>
    </source>
</reference>
<reference key="4">
    <citation type="submission" date="2007-01" db="EMBL/GenBank/DDBJ databases">
        <title>Arabidopsis ORF clones.</title>
        <authorList>
            <person name="Bautista V.R."/>
            <person name="Kim C.J."/>
            <person name="Chen H."/>
            <person name="Wu S.Y."/>
            <person name="De Los Reyes C."/>
            <person name="Ecker J.R."/>
        </authorList>
    </citation>
    <scope>NUCLEOTIDE SEQUENCE [LARGE SCALE MRNA]</scope>
    <source>
        <strain>cv. Columbia</strain>
    </source>
</reference>
<reference key="5">
    <citation type="journal article" date="2013" name="Plant Physiol.">
        <title>RRP41L, a putative core subunit of the exosome, plays an important role in seed germination and early seedling growth in Arabidopsis.</title>
        <authorList>
            <person name="Yang M."/>
            <person name="Zhang B."/>
            <person name="Jia J."/>
            <person name="Yan C."/>
            <person name="Habaike A."/>
            <person name="Han Y."/>
        </authorList>
    </citation>
    <scope>FUNCTION</scope>
    <scope>SUBCELLULAR LOCATION</scope>
    <scope>TISSUE SPECIFICITY</scope>
    <scope>DISRUPTION PHENOTYPE</scope>
</reference>
<proteinExistence type="evidence at transcript level"/>
<comment type="function">
    <text evidence="1 2">Non-catalytic component of the RNA exosome complex which has 3'-&gt;5' exoribonuclease activity and participates in a multitude of cellular RNA processing, maturation and degradation events. In vitro, is a processive phosphorolytic exonuclease and requires a single-stranded poly(A) tail on the substrate RNA for its activity (By similarity). Plays an important role in seed germination and early seedling growth by mediating specific cytoplasmic mRNA decay of transcripts coding for the abscisic acid (ABA) biosynthetic enzymes NCED5 and NCED6, and the ABA signaling transcription factors ABI3 and ABI4 (PubMed:23132787).</text>
</comment>
<comment type="subunit">
    <text evidence="1">Probable component of the RNA exosome complex.</text>
</comment>
<comment type="subcellular location">
    <subcellularLocation>
        <location evidence="2">Cytoplasm</location>
    </subcellularLocation>
    <subcellularLocation>
        <location evidence="2">Nucleus</location>
    </subcellularLocation>
</comment>
<comment type="tissue specificity">
    <text evidence="2">Highly expressed in imbibed seeds and young seedlings.</text>
</comment>
<comment type="disruption phenotype">
    <text evidence="2">Extremely slow growth, especially during the early stage of development.</text>
</comment>
<comment type="similarity">
    <text evidence="4">Belongs to the RNase PH family.</text>
</comment>
<comment type="sequence caution" evidence="4">
    <conflict type="frameshift">
        <sequence resource="EMBL-CDS" id="BAC43402"/>
    </conflict>
</comment>
<comment type="sequence caution" evidence="4">
    <conflict type="erroneous gene model prediction">
        <sequence resource="EMBL-CDS" id="CAB43881"/>
    </conflict>
</comment>
<comment type="sequence caution" evidence="4">
    <conflict type="erroneous gene model prediction">
        <sequence resource="EMBL-CDS" id="CAB81399"/>
    </conflict>
</comment>
<accession>A2RVK7</accession>
<accession>Q8GWJ0</accession>
<accession>Q9SZS4</accession>
<feature type="chain" id="PRO_0000435319" description="Exosome complex component RRP41-like">
    <location>
        <begin position="1"/>
        <end position="256"/>
    </location>
</feature>
<name>RP41L_ARATH</name>
<protein>
    <recommendedName>
        <fullName evidence="4">Exosome complex component RRP41-like</fullName>
    </recommendedName>
    <alternativeName>
        <fullName evidence="3">Protein SLOWER GROWTH</fullName>
    </alternativeName>
    <alternativeName>
        <fullName evidence="4">Ribosomal RNA-processing protein 41-like</fullName>
    </alternativeName>
</protein>
<sequence length="256" mass="27448">MAAKPGAATPTYSPKIVGRSRLPIFKDSDLDWSRPDGRGFHQCRPALLQTGAVSSASGSAYAEFGNTKVIVSVFGPRESKKAMVYSDVGRLNCNVSYTNFASPTLGQGTDHKEYSSMLHKALEGVIMMETFPKTTVDVFALVLESGGSDLSVLISCASLALADAGIMMYDLITAVSVSCIGKSLMIDPVTEEEGCEDGSFMMTCMPSRYEITQLTITGEWTTPNINEAMQLCLDASSKLGEIMRDCLKQSASASDE</sequence>
<gene>
    <name evidence="3" type="primary">RRP41L</name>
    <name evidence="3" type="synonym">SLG</name>
    <name evidence="5" type="ordered locus">At4g27490</name>
    <name evidence="6" type="ORF">F27G19.90</name>
</gene>
<evidence type="ECO:0000250" key="1">
    <source>
        <dbReference type="UniProtKB" id="Q9SP08"/>
    </source>
</evidence>
<evidence type="ECO:0000269" key="2">
    <source>
    </source>
</evidence>
<evidence type="ECO:0000303" key="3">
    <source>
    </source>
</evidence>
<evidence type="ECO:0000305" key="4"/>
<evidence type="ECO:0000312" key="5">
    <source>
        <dbReference type="Araport" id="AT4G27490"/>
    </source>
</evidence>
<evidence type="ECO:0000312" key="6">
    <source>
        <dbReference type="EMBL" id="CAB43881.1"/>
    </source>
</evidence>
<organism>
    <name type="scientific">Arabidopsis thaliana</name>
    <name type="common">Mouse-ear cress</name>
    <dbReference type="NCBI Taxonomy" id="3702"/>
    <lineage>
        <taxon>Eukaryota</taxon>
        <taxon>Viridiplantae</taxon>
        <taxon>Streptophyta</taxon>
        <taxon>Embryophyta</taxon>
        <taxon>Tracheophyta</taxon>
        <taxon>Spermatophyta</taxon>
        <taxon>Magnoliopsida</taxon>
        <taxon>eudicotyledons</taxon>
        <taxon>Gunneridae</taxon>
        <taxon>Pentapetalae</taxon>
        <taxon>rosids</taxon>
        <taxon>malvids</taxon>
        <taxon>Brassicales</taxon>
        <taxon>Brassicaceae</taxon>
        <taxon>Camelineae</taxon>
        <taxon>Arabidopsis</taxon>
    </lineage>
</organism>
<dbReference type="EMBL" id="AL078467">
    <property type="protein sequence ID" value="CAB43881.1"/>
    <property type="status" value="ALT_SEQ"/>
    <property type="molecule type" value="Genomic_DNA"/>
</dbReference>
<dbReference type="EMBL" id="AL161571">
    <property type="protein sequence ID" value="CAB81399.1"/>
    <property type="status" value="ALT_SEQ"/>
    <property type="molecule type" value="Genomic_DNA"/>
</dbReference>
<dbReference type="EMBL" id="CP002687">
    <property type="protein sequence ID" value="AEE85349.1"/>
    <property type="molecule type" value="Genomic_DNA"/>
</dbReference>
<dbReference type="EMBL" id="CP002687">
    <property type="protein sequence ID" value="ANM66335.1"/>
    <property type="molecule type" value="Genomic_DNA"/>
</dbReference>
<dbReference type="EMBL" id="CP002687">
    <property type="protein sequence ID" value="ANM66338.1"/>
    <property type="molecule type" value="Genomic_DNA"/>
</dbReference>
<dbReference type="EMBL" id="AK118812">
    <property type="protein sequence ID" value="BAC43402.1"/>
    <property type="status" value="ALT_FRAME"/>
    <property type="molecule type" value="mRNA"/>
</dbReference>
<dbReference type="EMBL" id="BT029998">
    <property type="protein sequence ID" value="ABN04736.1"/>
    <property type="molecule type" value="mRNA"/>
</dbReference>
<dbReference type="EMBL" id="BT030054">
    <property type="protein sequence ID" value="ABN04792.1"/>
    <property type="molecule type" value="mRNA"/>
</dbReference>
<dbReference type="PIR" id="T08941">
    <property type="entry name" value="T08941"/>
</dbReference>
<dbReference type="RefSeq" id="NP_001320075.1">
    <property type="nucleotide sequence ID" value="NM_001341852.1"/>
</dbReference>
<dbReference type="RefSeq" id="NP_001328238.1">
    <property type="nucleotide sequence ID" value="NM_001341854.1"/>
</dbReference>
<dbReference type="RefSeq" id="NP_001328241.1">
    <property type="nucleotide sequence ID" value="NM_001341855.1"/>
</dbReference>
<dbReference type="SMR" id="A2RVK7"/>
<dbReference type="FunCoup" id="A2RVK7">
    <property type="interactions" value="1209"/>
</dbReference>
<dbReference type="IntAct" id="A2RVK7">
    <property type="interactions" value="2"/>
</dbReference>
<dbReference type="STRING" id="3702.A2RVK7"/>
<dbReference type="iPTMnet" id="A2RVK7"/>
<dbReference type="PaxDb" id="3702-AT4G27490.1"/>
<dbReference type="ProteomicsDB" id="227986"/>
<dbReference type="EnsemblPlants" id="AT4G27490.1">
    <property type="protein sequence ID" value="AT4G27490.1"/>
    <property type="gene ID" value="AT4G27490"/>
</dbReference>
<dbReference type="EnsemblPlants" id="AT4G27490.3">
    <property type="protein sequence ID" value="AT4G27490.3"/>
    <property type="gene ID" value="AT4G27490"/>
</dbReference>
<dbReference type="EnsemblPlants" id="AT4G27490.4">
    <property type="protein sequence ID" value="AT4G27490.4"/>
    <property type="gene ID" value="AT4G27490"/>
</dbReference>
<dbReference type="GeneID" id="828858"/>
<dbReference type="Gramene" id="AT4G27490.1">
    <property type="protein sequence ID" value="AT4G27490.1"/>
    <property type="gene ID" value="AT4G27490"/>
</dbReference>
<dbReference type="Gramene" id="AT4G27490.3">
    <property type="protein sequence ID" value="AT4G27490.3"/>
    <property type="gene ID" value="AT4G27490"/>
</dbReference>
<dbReference type="Gramene" id="AT4G27490.4">
    <property type="protein sequence ID" value="AT4G27490.4"/>
    <property type="gene ID" value="AT4G27490"/>
</dbReference>
<dbReference type="KEGG" id="ath:AT4G27490"/>
<dbReference type="Araport" id="AT4G27490"/>
<dbReference type="TAIR" id="AT4G27490">
    <property type="gene designation" value="RRP41L"/>
</dbReference>
<dbReference type="eggNOG" id="ENOG502QWHI">
    <property type="taxonomic scope" value="Eukaryota"/>
</dbReference>
<dbReference type="HOGENOM" id="CLU_063514_1_1_1"/>
<dbReference type="InParanoid" id="A2RVK7"/>
<dbReference type="OMA" id="MCCVYGP"/>
<dbReference type="OrthoDB" id="27298at2759"/>
<dbReference type="PhylomeDB" id="A2RVK7"/>
<dbReference type="CD-CODE" id="4299E36E">
    <property type="entry name" value="Nucleolus"/>
</dbReference>
<dbReference type="PRO" id="PR:A2RVK7"/>
<dbReference type="Proteomes" id="UP000006548">
    <property type="component" value="Chromosome 4"/>
</dbReference>
<dbReference type="ExpressionAtlas" id="A2RVK7">
    <property type="expression patterns" value="baseline and differential"/>
</dbReference>
<dbReference type="GO" id="GO:0005737">
    <property type="term" value="C:cytoplasm"/>
    <property type="evidence" value="ECO:0000314"/>
    <property type="project" value="TAIR"/>
</dbReference>
<dbReference type="GO" id="GO:0000178">
    <property type="term" value="C:exosome (RNase complex)"/>
    <property type="evidence" value="ECO:0007669"/>
    <property type="project" value="UniProtKB-KW"/>
</dbReference>
<dbReference type="GO" id="GO:0005634">
    <property type="term" value="C:nucleus"/>
    <property type="evidence" value="ECO:0000314"/>
    <property type="project" value="TAIR"/>
</dbReference>
<dbReference type="GO" id="GO:0008408">
    <property type="term" value="F:3'-5' exonuclease activity"/>
    <property type="evidence" value="ECO:0000315"/>
    <property type="project" value="TAIR"/>
</dbReference>
<dbReference type="GO" id="GO:0003723">
    <property type="term" value="F:RNA binding"/>
    <property type="evidence" value="ECO:0007669"/>
    <property type="project" value="UniProtKB-KW"/>
</dbReference>
<dbReference type="GO" id="GO:0006364">
    <property type="term" value="P:rRNA processing"/>
    <property type="evidence" value="ECO:0007669"/>
    <property type="project" value="UniProtKB-KW"/>
</dbReference>
<dbReference type="GO" id="GO:0009845">
    <property type="term" value="P:seed germination"/>
    <property type="evidence" value="ECO:0000315"/>
    <property type="project" value="TAIR"/>
</dbReference>
<dbReference type="GO" id="GO:0090351">
    <property type="term" value="P:seedling development"/>
    <property type="evidence" value="ECO:0000315"/>
    <property type="project" value="TAIR"/>
</dbReference>
<dbReference type="CDD" id="cd11371">
    <property type="entry name" value="RNase_PH_MTR3"/>
    <property type="match status" value="1"/>
</dbReference>
<dbReference type="FunFam" id="3.30.230.70:FF:000015">
    <property type="entry name" value="Exosome complex component RRP41-like"/>
    <property type="match status" value="1"/>
</dbReference>
<dbReference type="Gene3D" id="3.30.230.70">
    <property type="entry name" value="GHMP Kinase, N-terminal domain"/>
    <property type="match status" value="1"/>
</dbReference>
<dbReference type="InterPro" id="IPR001247">
    <property type="entry name" value="ExoRNase_PH_dom1"/>
</dbReference>
<dbReference type="InterPro" id="IPR015847">
    <property type="entry name" value="ExoRNase_PH_dom2"/>
</dbReference>
<dbReference type="InterPro" id="IPR036345">
    <property type="entry name" value="ExoRNase_PH_dom2_sf"/>
</dbReference>
<dbReference type="InterPro" id="IPR027408">
    <property type="entry name" value="PNPase/RNase_PH_dom_sf"/>
</dbReference>
<dbReference type="InterPro" id="IPR020568">
    <property type="entry name" value="Ribosomal_Su5_D2-typ_SF"/>
</dbReference>
<dbReference type="InterPro" id="IPR050080">
    <property type="entry name" value="RNase_PH"/>
</dbReference>
<dbReference type="PANTHER" id="PTHR11953">
    <property type="entry name" value="EXOSOME COMPLEX COMPONENT"/>
    <property type="match status" value="1"/>
</dbReference>
<dbReference type="PANTHER" id="PTHR11953:SF2">
    <property type="entry name" value="EXOSOME COMPLEX COMPONENT MTR3"/>
    <property type="match status" value="1"/>
</dbReference>
<dbReference type="Pfam" id="PF01138">
    <property type="entry name" value="RNase_PH"/>
    <property type="match status" value="1"/>
</dbReference>
<dbReference type="Pfam" id="PF03725">
    <property type="entry name" value="RNase_PH_C"/>
    <property type="match status" value="1"/>
</dbReference>
<dbReference type="SUPFAM" id="SSF55666">
    <property type="entry name" value="Ribonuclease PH domain 2-like"/>
    <property type="match status" value="1"/>
</dbReference>
<dbReference type="SUPFAM" id="SSF54211">
    <property type="entry name" value="Ribosomal protein S5 domain 2-like"/>
    <property type="match status" value="1"/>
</dbReference>